<accession>P85355</accession>
<evidence type="ECO:0000255" key="1"/>
<evidence type="ECO:0000269" key="2">
    <source>
    </source>
</evidence>
<evidence type="ECO:0000303" key="3">
    <source>
    </source>
</evidence>
<evidence type="ECO:0000305" key="4"/>
<comment type="function">
    <text evidence="4">Defense against chitin-containing fungal pathogens.</text>
</comment>
<comment type="catalytic activity">
    <reaction>
        <text>Random endo-hydrolysis of N-acetyl-beta-D-glucosaminide (1-&gt;4)-beta-linkages in chitin and chitodextrins.</text>
        <dbReference type="EC" id="3.2.1.14"/>
    </reaction>
</comment>
<comment type="subcellular location">
    <subcellularLocation>
        <location evidence="2">Secreted</location>
        <location evidence="2">Cell wall</location>
    </subcellularLocation>
</comment>
<comment type="similarity">
    <text evidence="1">Belongs to the glycosyl hydrolase 19 family. Chitinase class I subfamily.</text>
</comment>
<dbReference type="EC" id="3.2.1.14"/>
<dbReference type="GO" id="GO:0005576">
    <property type="term" value="C:extracellular region"/>
    <property type="evidence" value="ECO:0007669"/>
    <property type="project" value="UniProtKB-KW"/>
</dbReference>
<dbReference type="GO" id="GO:0008843">
    <property type="term" value="F:endochitinase activity"/>
    <property type="evidence" value="ECO:0007669"/>
    <property type="project" value="UniProtKB-EC"/>
</dbReference>
<dbReference type="GO" id="GO:0006032">
    <property type="term" value="P:chitin catabolic process"/>
    <property type="evidence" value="ECO:0007669"/>
    <property type="project" value="UniProtKB-KW"/>
</dbReference>
<dbReference type="GO" id="GO:0006952">
    <property type="term" value="P:defense response"/>
    <property type="evidence" value="ECO:0007669"/>
    <property type="project" value="UniProtKB-KW"/>
</dbReference>
<dbReference type="GO" id="GO:0000272">
    <property type="term" value="P:polysaccharide catabolic process"/>
    <property type="evidence" value="ECO:0007669"/>
    <property type="project" value="UniProtKB-KW"/>
</dbReference>
<organism>
    <name type="scientific">Taxus baccata</name>
    <name type="common">English yew</name>
    <dbReference type="NCBI Taxonomy" id="25629"/>
    <lineage>
        <taxon>Eukaryota</taxon>
        <taxon>Viridiplantae</taxon>
        <taxon>Streptophyta</taxon>
        <taxon>Embryophyta</taxon>
        <taxon>Tracheophyta</taxon>
        <taxon>Spermatophyta</taxon>
        <taxon>Pinopsida</taxon>
        <taxon>Pinidae</taxon>
        <taxon>Conifers II</taxon>
        <taxon>Cupressales</taxon>
        <taxon>Taxaceae</taxon>
        <taxon>Taxus</taxon>
    </lineage>
</organism>
<sequence length="13" mass="1452">MYDESTGYSSALK</sequence>
<reference evidence="4" key="1">
    <citation type="journal article" date="2009" name="J. Plant Physiol.">
        <title>Analysis of the soluble cell wall proteome of gymnosperms.</title>
        <authorList>
            <person name="Uzal E.N."/>
            <person name="Gomez-Ros L.V."/>
            <person name="Hernandez J.A."/>
            <person name="Pedreno M.A."/>
            <person name="Cuello J."/>
            <person name="Ros Barcelo A."/>
        </authorList>
    </citation>
    <scope>PROTEIN SEQUENCE</scope>
    <scope>SUBCELLULAR LOCATION</scope>
    <source>
        <strain evidence="2">PC-1008</strain>
        <tissue evidence="2">Callus</tissue>
    </source>
</reference>
<protein>
    <recommendedName>
        <fullName>Endochitinase 3</fullName>
        <ecNumber>3.2.1.14</ecNumber>
    </recommendedName>
</protein>
<keyword id="KW-0119">Carbohydrate metabolism</keyword>
<keyword id="KW-0134">Cell wall</keyword>
<keyword id="KW-0146">Chitin degradation</keyword>
<keyword id="KW-0903">Direct protein sequencing</keyword>
<keyword id="KW-0326">Glycosidase</keyword>
<keyword id="KW-0378">Hydrolase</keyword>
<keyword id="KW-0611">Plant defense</keyword>
<keyword id="KW-0624">Polysaccharide degradation</keyword>
<keyword id="KW-0964">Secreted</keyword>
<name>CHI3_TAXBA</name>
<feature type="chain" id="PRO_0000315928" description="Endochitinase 3">
    <location>
        <begin position="1" status="less than"/>
        <end position="13" status="greater than"/>
    </location>
</feature>
<feature type="unsure residue" description="M or F" evidence="2">
    <location>
        <position position="1"/>
    </location>
</feature>
<feature type="unsure residue" description="L or I" evidence="2">
    <location>
        <position position="12"/>
    </location>
</feature>
<feature type="unsure residue" description="K or Q" evidence="2">
    <location>
        <position position="13"/>
    </location>
</feature>
<feature type="non-terminal residue" evidence="3">
    <location>
        <position position="1"/>
    </location>
</feature>
<feature type="non-terminal residue" evidence="3">
    <location>
        <position position="13"/>
    </location>
</feature>
<proteinExistence type="evidence at protein level"/>